<name>AN_SHV21</name>
<proteinExistence type="inferred from homology"/>
<protein>
    <recommendedName>
        <fullName evidence="1">Shutoff alkaline exonuclease</fullName>
        <shortName evidence="1">SOX</shortName>
        <ecNumber evidence="1">3.1.-.-</ecNumber>
    </recommendedName>
</protein>
<keyword id="KW-0255">Endonuclease</keyword>
<keyword id="KW-0269">Exonuclease</keyword>
<keyword id="KW-1035">Host cytoplasm</keyword>
<keyword id="KW-1048">Host nucleus</keyword>
<keyword id="KW-0945">Host-virus interaction</keyword>
<keyword id="KW-0378">Hydrolase</keyword>
<keyword id="KW-0540">Nuclease</keyword>
<keyword id="KW-1185">Reference proteome</keyword>
<accession>Q01013</accession>
<organism>
    <name type="scientific">Saimiriine herpesvirus 2 (strain 11)</name>
    <name type="common">SaHV-2</name>
    <name type="synonym">Herpesvirus saimiri</name>
    <dbReference type="NCBI Taxonomy" id="10383"/>
    <lineage>
        <taxon>Viruses</taxon>
        <taxon>Duplodnaviria</taxon>
        <taxon>Heunggongvirae</taxon>
        <taxon>Peploviricota</taxon>
        <taxon>Herviviricetes</taxon>
        <taxon>Herpesvirales</taxon>
        <taxon>Orthoherpesviridae</taxon>
        <taxon>Gammaherpesvirinae</taxon>
        <taxon>Rhadinovirus</taxon>
        <taxon>Rhadinovirus saimiriinegamma2</taxon>
        <taxon>Saimiriine herpesvirus 2</taxon>
    </lineage>
</organism>
<evidence type="ECO:0000255" key="1">
    <source>
        <dbReference type="HAMAP-Rule" id="MF_04009"/>
    </source>
</evidence>
<organismHost>
    <name type="scientific">Saimiri sciureus</name>
    <name type="common">Common squirrel monkey</name>
    <dbReference type="NCBI Taxonomy" id="9521"/>
</organismHost>
<comment type="function">
    <text evidence="1">Plays a role in processing non linear or branched viral DNA intermediates in order to promote the production of mature packaged unit-length linear progeny viral DNA molecules. Exhibits endonuclease and exonuclease activities and accepts both double-stranded and single-stranded DNA as substrate. Exonuclease digestion of DNA is in the 5'-&gt; 3' direction and the products are 5'-monophosphate nucleosides. Additionally, forms a recombinase with the major DNA-binding protein, which displays strand exchange activity. Also acts as a cytoplasmic RNA endonuclease that induces degradation of the majority of the cellular messenger RNAs during early lytic infection. The resulting inhibition of cellular protein synthesis serves to ensure maximal viral gene expression and evasion from host immune response. Internally cleaves host mRNAs which are then degraded by the cellular exonuclease XRN1. Bypasses therefore the regulatory steps of deadenylation and decapping normally required for XRN1 activation.</text>
</comment>
<comment type="subunit">
    <text evidence="1">Forms a complex with the DNA polymerase, the DNA polymerase processivity factor, and the major DNA binding protein.</text>
</comment>
<comment type="subcellular location">
    <subcellularLocation>
        <location evidence="1">Host nucleus</location>
    </subcellularLocation>
    <subcellularLocation>
        <location evidence="1">Host cytoplasm</location>
    </subcellularLocation>
</comment>
<comment type="similarity">
    <text evidence="1">Belongs to the herpesviridae alkaline nuclease family.</text>
</comment>
<gene>
    <name type="primary">37</name>
</gene>
<dbReference type="EC" id="3.1.-.-" evidence="1"/>
<dbReference type="EMBL" id="X64346">
    <property type="protein sequence ID" value="CAA45660.1"/>
    <property type="molecule type" value="Genomic_DNA"/>
</dbReference>
<dbReference type="RefSeq" id="NP_040239.1">
    <property type="nucleotide sequence ID" value="NC_001350.1"/>
</dbReference>
<dbReference type="SMR" id="Q01013"/>
<dbReference type="KEGG" id="vg:1682500"/>
<dbReference type="Proteomes" id="UP000000587">
    <property type="component" value="Segment"/>
</dbReference>
<dbReference type="GO" id="GO:0030430">
    <property type="term" value="C:host cell cytoplasm"/>
    <property type="evidence" value="ECO:0007669"/>
    <property type="project" value="UniProtKB-SubCell"/>
</dbReference>
<dbReference type="GO" id="GO:0042025">
    <property type="term" value="C:host cell nucleus"/>
    <property type="evidence" value="ECO:0007669"/>
    <property type="project" value="UniProtKB-SubCell"/>
</dbReference>
<dbReference type="GO" id="GO:0003677">
    <property type="term" value="F:DNA binding"/>
    <property type="evidence" value="ECO:0007669"/>
    <property type="project" value="InterPro"/>
</dbReference>
<dbReference type="GO" id="GO:0004519">
    <property type="term" value="F:endonuclease activity"/>
    <property type="evidence" value="ECO:0007669"/>
    <property type="project" value="UniProtKB-KW"/>
</dbReference>
<dbReference type="GO" id="GO:0004527">
    <property type="term" value="F:exonuclease activity"/>
    <property type="evidence" value="ECO:0007669"/>
    <property type="project" value="UniProtKB-KW"/>
</dbReference>
<dbReference type="Gene3D" id="1.20.120.860">
    <property type="entry name" value="Herpesvirus alkaline exonuclease, N-terminal domain"/>
    <property type="match status" value="1"/>
</dbReference>
<dbReference type="HAMAP" id="MF_04009">
    <property type="entry name" value="HSV_AN"/>
    <property type="match status" value="1"/>
</dbReference>
<dbReference type="InterPro" id="IPR001616">
    <property type="entry name" value="Herpes_alk_exo"/>
</dbReference>
<dbReference type="InterPro" id="IPR011335">
    <property type="entry name" value="Restrct_endonuc-II-like"/>
</dbReference>
<dbReference type="InterPro" id="IPR034720">
    <property type="entry name" value="Viral_alk_exo"/>
</dbReference>
<dbReference type="Pfam" id="PF01771">
    <property type="entry name" value="Viral_alk_exo"/>
    <property type="match status" value="1"/>
</dbReference>
<dbReference type="PRINTS" id="PR00924">
    <property type="entry name" value="ALKEXNUCLASE"/>
</dbReference>
<dbReference type="SUPFAM" id="SSF52980">
    <property type="entry name" value="Restriction endonuclease-like"/>
    <property type="match status" value="1"/>
</dbReference>
<feature type="chain" id="PRO_0000115698" description="Shutoff alkaline exonuclease">
    <location>
        <begin position="1"/>
        <end position="483"/>
    </location>
</feature>
<feature type="site" description="Required for function" evidence="1">
    <location>
        <position position="180"/>
    </location>
</feature>
<feature type="site" description="Required for function" evidence="1">
    <location>
        <position position="218"/>
    </location>
</feature>
<feature type="site" description="Required for function" evidence="1">
    <location>
        <position position="241"/>
    </location>
</feature>
<feature type="site" description="Required for function" evidence="1">
    <location>
        <position position="243"/>
    </location>
</feature>
<sequence>MDLFSEESPINEIGNMDMTDQQTQLCSSSFSHFLKHPKVQHFISTYSELVKMPTIRYVYFYYLFKKIGGFIGNEKIGTYFSKNVCNNIAAKGVPKLADVYKACEKMNLRQQSEICLLIEEVTRGQYLNSLWDALRDGTISSSKFYWATKKQNSTKKIFEPWPIKNDYYVAGPLAFGLRCEEVIKTVLNELICTPKQASCFDCGFMQSPLDGIFGVSLDYCTNVETNKDNLLVFHPDTEVYEIKSRFKYLFDKSECDTLYKKYKELYSNPCVKTLIKFIFSVSKPAIEFVPSGRLPSESDYLLAYDEEWNLRPTKKRKLNASHEMIKKCIEYNSYAGSQIYILSDPAENNGQITVKSKFKAGIFMNPRHTYFYQVALQHRVVQSYIGLSESPKSLGTQKNFIVSSFFRKRHFSDPPVCYVGKKQLEKTVEIPVFIIITPVYIPRSALLETISQAVNFWEESAKEAFTEYPWAPCALFANGDLTP</sequence>
<reference key="1">
    <citation type="journal article" date="1992" name="J. Virol.">
        <title>Primary structure of the herpesvirus saimiri genome.</title>
        <authorList>
            <person name="Albrecht J.-C."/>
            <person name="Nicholas J."/>
            <person name="Biller D."/>
            <person name="Cameron K.R."/>
            <person name="Biesinger B."/>
            <person name="Newman C."/>
            <person name="Wittmann S."/>
            <person name="Craxton M.A."/>
            <person name="Coleman H."/>
            <person name="Fleckenstein B."/>
            <person name="Honess R.W."/>
        </authorList>
    </citation>
    <scope>NUCLEOTIDE SEQUENCE [LARGE SCALE GENOMIC DNA]</scope>
</reference>